<organism>
    <name type="scientific">Mus musculus</name>
    <name type="common">Mouse</name>
    <dbReference type="NCBI Taxonomy" id="10090"/>
    <lineage>
        <taxon>Eukaryota</taxon>
        <taxon>Metazoa</taxon>
        <taxon>Chordata</taxon>
        <taxon>Craniata</taxon>
        <taxon>Vertebrata</taxon>
        <taxon>Euteleostomi</taxon>
        <taxon>Mammalia</taxon>
        <taxon>Eutheria</taxon>
        <taxon>Euarchontoglires</taxon>
        <taxon>Glires</taxon>
        <taxon>Rodentia</taxon>
        <taxon>Myomorpha</taxon>
        <taxon>Muroidea</taxon>
        <taxon>Muridae</taxon>
        <taxon>Murinae</taxon>
        <taxon>Mus</taxon>
        <taxon>Mus</taxon>
    </lineage>
</organism>
<accession>Q9CPQ3</accession>
<accession>Q543M4</accession>
<accession>Q9D8D3</accession>
<feature type="initiator methionine" description="Removed" evidence="3">
    <location>
        <position position="1"/>
    </location>
</feature>
<feature type="chain" id="PRO_0000076108" description="Mitochondrial import receptor subunit TOM22 homolog">
    <location>
        <begin position="2"/>
        <end position="142"/>
    </location>
</feature>
<feature type="topological domain" description="Cytoplasmic" evidence="4">
    <location>
        <begin position="2"/>
        <end position="83"/>
    </location>
</feature>
<feature type="transmembrane region" description="Helical" evidence="4">
    <location>
        <begin position="84"/>
        <end position="103"/>
    </location>
</feature>
<feature type="topological domain" description="Mitochondrial intermembrane" evidence="4">
    <location>
        <begin position="104"/>
        <end position="142"/>
    </location>
</feature>
<feature type="region of interest" description="Disordered" evidence="5">
    <location>
        <begin position="1"/>
        <end position="41"/>
    </location>
</feature>
<feature type="region of interest" description="Import sequence; necessary for mitochondrion outer membrane localization and integration in the TOM complex" evidence="1">
    <location>
        <begin position="41"/>
        <end position="50"/>
    </location>
</feature>
<feature type="region of interest" description="TMD; necessary for mitochondrion outer membrane localization and integration in the TOM complex" evidence="1">
    <location>
        <begin position="83"/>
        <end position="103"/>
    </location>
</feature>
<feature type="region of interest" description="C-tail signal; necessary for mitochondrion outer membrane localization and integration in the TOM complex" evidence="1">
    <location>
        <begin position="123"/>
        <end position="142"/>
    </location>
</feature>
<feature type="compositionally biased region" description="Low complexity" evidence="5">
    <location>
        <begin position="1"/>
        <end position="18"/>
    </location>
</feature>
<feature type="compositionally biased region" description="Acidic residues" evidence="5">
    <location>
        <begin position="27"/>
        <end position="41"/>
    </location>
</feature>
<feature type="modified residue" description="N-acetylalanine" evidence="3">
    <location>
        <position position="2"/>
    </location>
</feature>
<feature type="modified residue" description="Phosphoserine" evidence="3">
    <location>
        <position position="15"/>
    </location>
</feature>
<feature type="modified residue" description="Phosphothreonine" evidence="3">
    <location>
        <position position="43"/>
    </location>
</feature>
<feature type="modified residue" description="Phosphoserine" evidence="7">
    <location>
        <position position="45"/>
    </location>
</feature>
<feature type="sequence conflict" description="In Ref. 1; BAB25482." evidence="6" ref="1">
    <original>D</original>
    <variation>H</variation>
    <location>
        <position position="38"/>
    </location>
</feature>
<feature type="sequence conflict" description="In Ref. 1; BAB25482." evidence="6" ref="1">
    <original>A</original>
    <variation>T</variation>
    <location>
        <position position="65"/>
    </location>
</feature>
<dbReference type="EMBL" id="AK008133">
    <property type="protein sequence ID" value="BAB25482.1"/>
    <property type="molecule type" value="mRNA"/>
</dbReference>
<dbReference type="EMBL" id="AK009868">
    <property type="protein sequence ID" value="BAB26553.1"/>
    <property type="molecule type" value="mRNA"/>
</dbReference>
<dbReference type="EMBL" id="AK013471">
    <property type="protein sequence ID" value="BAB28871.1"/>
    <property type="molecule type" value="mRNA"/>
</dbReference>
<dbReference type="EMBL" id="AK049442">
    <property type="protein sequence ID" value="BAC33752.1"/>
    <property type="molecule type" value="mRNA"/>
</dbReference>
<dbReference type="EMBL" id="AK150360">
    <property type="protein sequence ID" value="BAE29495.1"/>
    <property type="molecule type" value="mRNA"/>
</dbReference>
<dbReference type="EMBL" id="AK152843">
    <property type="protein sequence ID" value="BAE31536.1"/>
    <property type="molecule type" value="mRNA"/>
</dbReference>
<dbReference type="EMBL" id="AK167803">
    <property type="protein sequence ID" value="BAE39830.1"/>
    <property type="molecule type" value="mRNA"/>
</dbReference>
<dbReference type="EMBL" id="BC056920">
    <property type="protein sequence ID" value="AAH56920.1"/>
    <property type="molecule type" value="mRNA"/>
</dbReference>
<dbReference type="CCDS" id="CCDS27646.1"/>
<dbReference type="RefSeq" id="NP_766197.2">
    <property type="nucleotide sequence ID" value="NM_172609.3"/>
</dbReference>
<dbReference type="SMR" id="Q9CPQ3"/>
<dbReference type="BioGRID" id="230178">
    <property type="interactions" value="7"/>
</dbReference>
<dbReference type="FunCoup" id="Q9CPQ3">
    <property type="interactions" value="3298"/>
</dbReference>
<dbReference type="IntAct" id="Q9CPQ3">
    <property type="interactions" value="2"/>
</dbReference>
<dbReference type="MINT" id="Q9CPQ3"/>
<dbReference type="STRING" id="10090.ENSMUSP00000023062"/>
<dbReference type="GlyGen" id="Q9CPQ3">
    <property type="glycosylation" value="1 site, 1 O-linked glycan (1 site)"/>
</dbReference>
<dbReference type="iPTMnet" id="Q9CPQ3"/>
<dbReference type="PhosphoSitePlus" id="Q9CPQ3"/>
<dbReference type="SwissPalm" id="Q9CPQ3"/>
<dbReference type="jPOST" id="Q9CPQ3"/>
<dbReference type="PaxDb" id="10090-ENSMUSP00000023062"/>
<dbReference type="PeptideAtlas" id="Q9CPQ3"/>
<dbReference type="ProteomicsDB" id="260720"/>
<dbReference type="Pumba" id="Q9CPQ3"/>
<dbReference type="TopDownProteomics" id="Q9CPQ3"/>
<dbReference type="Antibodypedia" id="291">
    <property type="antibodies" value="135 antibodies from 28 providers"/>
</dbReference>
<dbReference type="DNASU" id="223696"/>
<dbReference type="Ensembl" id="ENSMUST00000023062.5">
    <property type="protein sequence ID" value="ENSMUSP00000023062.4"/>
    <property type="gene ID" value="ENSMUSG00000022427.5"/>
</dbReference>
<dbReference type="GeneID" id="223696"/>
<dbReference type="KEGG" id="mmu:223696"/>
<dbReference type="UCSC" id="uc007wud.1">
    <property type="organism name" value="mouse"/>
</dbReference>
<dbReference type="AGR" id="MGI:2450248"/>
<dbReference type="CTD" id="56993"/>
<dbReference type="MGI" id="MGI:2450248">
    <property type="gene designation" value="Tomm22"/>
</dbReference>
<dbReference type="VEuPathDB" id="HostDB:ENSMUSG00000022427"/>
<dbReference type="eggNOG" id="KOG4111">
    <property type="taxonomic scope" value="Eukaryota"/>
</dbReference>
<dbReference type="GeneTree" id="ENSGT00390000016475"/>
<dbReference type="HOGENOM" id="CLU_108175_1_0_1"/>
<dbReference type="InParanoid" id="Q9CPQ3"/>
<dbReference type="OMA" id="DKDSGME"/>
<dbReference type="OrthoDB" id="10016939at2759"/>
<dbReference type="PhylomeDB" id="Q9CPQ3"/>
<dbReference type="TreeFam" id="TF106201"/>
<dbReference type="Reactome" id="R-MMU-5205685">
    <property type="pathway name" value="PINK1-PRKN Mediated Mitophagy"/>
</dbReference>
<dbReference type="BioGRID-ORCS" id="223696">
    <property type="hits" value="23 hits in 77 CRISPR screens"/>
</dbReference>
<dbReference type="ChiTaRS" id="Tomm22">
    <property type="organism name" value="mouse"/>
</dbReference>
<dbReference type="PRO" id="PR:Q9CPQ3"/>
<dbReference type="Proteomes" id="UP000000589">
    <property type="component" value="Chromosome 15"/>
</dbReference>
<dbReference type="RNAct" id="Q9CPQ3">
    <property type="molecule type" value="protein"/>
</dbReference>
<dbReference type="Bgee" id="ENSMUSG00000022427">
    <property type="expression patterns" value="Expressed in spermatid and 73 other cell types or tissues"/>
</dbReference>
<dbReference type="ExpressionAtlas" id="Q9CPQ3">
    <property type="expression patterns" value="baseline and differential"/>
</dbReference>
<dbReference type="GO" id="GO:0005743">
    <property type="term" value="C:mitochondrial inner membrane"/>
    <property type="evidence" value="ECO:0007005"/>
    <property type="project" value="MGI"/>
</dbReference>
<dbReference type="GO" id="GO:0005742">
    <property type="term" value="C:mitochondrial outer membrane translocase complex"/>
    <property type="evidence" value="ECO:0007669"/>
    <property type="project" value="Ensembl"/>
</dbReference>
<dbReference type="GO" id="GO:0005739">
    <property type="term" value="C:mitochondrion"/>
    <property type="evidence" value="ECO:0007005"/>
    <property type="project" value="MGI"/>
</dbReference>
<dbReference type="GO" id="GO:0030943">
    <property type="term" value="F:mitochondrion targeting sequence binding"/>
    <property type="evidence" value="ECO:0007669"/>
    <property type="project" value="Ensembl"/>
</dbReference>
<dbReference type="GO" id="GO:0045040">
    <property type="term" value="P:protein insertion into mitochondrial outer membrane"/>
    <property type="evidence" value="ECO:0007669"/>
    <property type="project" value="Ensembl"/>
</dbReference>
<dbReference type="GO" id="GO:0006626">
    <property type="term" value="P:protein targeting to mitochondrion"/>
    <property type="evidence" value="ECO:0000250"/>
    <property type="project" value="UniProtKB"/>
</dbReference>
<dbReference type="CDD" id="cd22884">
    <property type="entry name" value="TOM22"/>
    <property type="match status" value="1"/>
</dbReference>
<dbReference type="InterPro" id="IPR005683">
    <property type="entry name" value="Tom22"/>
</dbReference>
<dbReference type="PANTHER" id="PTHR12504">
    <property type="entry name" value="MITOCHONDRIAL IMPORT RECEPTOR SUBUNIT TOM22"/>
    <property type="match status" value="1"/>
</dbReference>
<dbReference type="PANTHER" id="PTHR12504:SF0">
    <property type="entry name" value="MITOCHONDRIAL IMPORT RECEPTOR SUBUNIT TOM22 HOMOLOG"/>
    <property type="match status" value="1"/>
</dbReference>
<dbReference type="Pfam" id="PF04281">
    <property type="entry name" value="Tom22"/>
    <property type="match status" value="1"/>
</dbReference>
<keyword id="KW-0007">Acetylation</keyword>
<keyword id="KW-0472">Membrane</keyword>
<keyword id="KW-0496">Mitochondrion</keyword>
<keyword id="KW-1000">Mitochondrion outer membrane</keyword>
<keyword id="KW-0597">Phosphoprotein</keyword>
<keyword id="KW-0653">Protein transport</keyword>
<keyword id="KW-0675">Receptor</keyword>
<keyword id="KW-1185">Reference proteome</keyword>
<keyword id="KW-0811">Translocation</keyword>
<keyword id="KW-0812">Transmembrane</keyword>
<keyword id="KW-1133">Transmembrane helix</keyword>
<keyword id="KW-0813">Transport</keyword>
<reference key="1">
    <citation type="journal article" date="2005" name="Science">
        <title>The transcriptional landscape of the mammalian genome.</title>
        <authorList>
            <person name="Carninci P."/>
            <person name="Kasukawa T."/>
            <person name="Katayama S."/>
            <person name="Gough J."/>
            <person name="Frith M.C."/>
            <person name="Maeda N."/>
            <person name="Oyama R."/>
            <person name="Ravasi T."/>
            <person name="Lenhard B."/>
            <person name="Wells C."/>
            <person name="Kodzius R."/>
            <person name="Shimokawa K."/>
            <person name="Bajic V.B."/>
            <person name="Brenner S.E."/>
            <person name="Batalov S."/>
            <person name="Forrest A.R."/>
            <person name="Zavolan M."/>
            <person name="Davis M.J."/>
            <person name="Wilming L.G."/>
            <person name="Aidinis V."/>
            <person name="Allen J.E."/>
            <person name="Ambesi-Impiombato A."/>
            <person name="Apweiler R."/>
            <person name="Aturaliya R.N."/>
            <person name="Bailey T.L."/>
            <person name="Bansal M."/>
            <person name="Baxter L."/>
            <person name="Beisel K.W."/>
            <person name="Bersano T."/>
            <person name="Bono H."/>
            <person name="Chalk A.M."/>
            <person name="Chiu K.P."/>
            <person name="Choudhary V."/>
            <person name="Christoffels A."/>
            <person name="Clutterbuck D.R."/>
            <person name="Crowe M.L."/>
            <person name="Dalla E."/>
            <person name="Dalrymple B.P."/>
            <person name="de Bono B."/>
            <person name="Della Gatta G."/>
            <person name="di Bernardo D."/>
            <person name="Down T."/>
            <person name="Engstrom P."/>
            <person name="Fagiolini M."/>
            <person name="Faulkner G."/>
            <person name="Fletcher C.F."/>
            <person name="Fukushima T."/>
            <person name="Furuno M."/>
            <person name="Futaki S."/>
            <person name="Gariboldi M."/>
            <person name="Georgii-Hemming P."/>
            <person name="Gingeras T.R."/>
            <person name="Gojobori T."/>
            <person name="Green R.E."/>
            <person name="Gustincich S."/>
            <person name="Harbers M."/>
            <person name="Hayashi Y."/>
            <person name="Hensch T.K."/>
            <person name="Hirokawa N."/>
            <person name="Hill D."/>
            <person name="Huminiecki L."/>
            <person name="Iacono M."/>
            <person name="Ikeo K."/>
            <person name="Iwama A."/>
            <person name="Ishikawa T."/>
            <person name="Jakt M."/>
            <person name="Kanapin A."/>
            <person name="Katoh M."/>
            <person name="Kawasawa Y."/>
            <person name="Kelso J."/>
            <person name="Kitamura H."/>
            <person name="Kitano H."/>
            <person name="Kollias G."/>
            <person name="Krishnan S.P."/>
            <person name="Kruger A."/>
            <person name="Kummerfeld S.K."/>
            <person name="Kurochkin I.V."/>
            <person name="Lareau L.F."/>
            <person name="Lazarevic D."/>
            <person name="Lipovich L."/>
            <person name="Liu J."/>
            <person name="Liuni S."/>
            <person name="McWilliam S."/>
            <person name="Madan Babu M."/>
            <person name="Madera M."/>
            <person name="Marchionni L."/>
            <person name="Matsuda H."/>
            <person name="Matsuzawa S."/>
            <person name="Miki H."/>
            <person name="Mignone F."/>
            <person name="Miyake S."/>
            <person name="Morris K."/>
            <person name="Mottagui-Tabar S."/>
            <person name="Mulder N."/>
            <person name="Nakano N."/>
            <person name="Nakauchi H."/>
            <person name="Ng P."/>
            <person name="Nilsson R."/>
            <person name="Nishiguchi S."/>
            <person name="Nishikawa S."/>
            <person name="Nori F."/>
            <person name="Ohara O."/>
            <person name="Okazaki Y."/>
            <person name="Orlando V."/>
            <person name="Pang K.C."/>
            <person name="Pavan W.J."/>
            <person name="Pavesi G."/>
            <person name="Pesole G."/>
            <person name="Petrovsky N."/>
            <person name="Piazza S."/>
            <person name="Reed J."/>
            <person name="Reid J.F."/>
            <person name="Ring B.Z."/>
            <person name="Ringwald M."/>
            <person name="Rost B."/>
            <person name="Ruan Y."/>
            <person name="Salzberg S.L."/>
            <person name="Sandelin A."/>
            <person name="Schneider C."/>
            <person name="Schoenbach C."/>
            <person name="Sekiguchi K."/>
            <person name="Semple C.A."/>
            <person name="Seno S."/>
            <person name="Sessa L."/>
            <person name="Sheng Y."/>
            <person name="Shibata Y."/>
            <person name="Shimada H."/>
            <person name="Shimada K."/>
            <person name="Silva D."/>
            <person name="Sinclair B."/>
            <person name="Sperling S."/>
            <person name="Stupka E."/>
            <person name="Sugiura K."/>
            <person name="Sultana R."/>
            <person name="Takenaka Y."/>
            <person name="Taki K."/>
            <person name="Tammoja K."/>
            <person name="Tan S.L."/>
            <person name="Tang S."/>
            <person name="Taylor M.S."/>
            <person name="Tegner J."/>
            <person name="Teichmann S.A."/>
            <person name="Ueda H.R."/>
            <person name="van Nimwegen E."/>
            <person name="Verardo R."/>
            <person name="Wei C.L."/>
            <person name="Yagi K."/>
            <person name="Yamanishi H."/>
            <person name="Zabarovsky E."/>
            <person name="Zhu S."/>
            <person name="Zimmer A."/>
            <person name="Hide W."/>
            <person name="Bult C."/>
            <person name="Grimmond S.M."/>
            <person name="Teasdale R.D."/>
            <person name="Liu E.T."/>
            <person name="Brusic V."/>
            <person name="Quackenbush J."/>
            <person name="Wahlestedt C."/>
            <person name="Mattick J.S."/>
            <person name="Hume D.A."/>
            <person name="Kai C."/>
            <person name="Sasaki D."/>
            <person name="Tomaru Y."/>
            <person name="Fukuda S."/>
            <person name="Kanamori-Katayama M."/>
            <person name="Suzuki M."/>
            <person name="Aoki J."/>
            <person name="Arakawa T."/>
            <person name="Iida J."/>
            <person name="Imamura K."/>
            <person name="Itoh M."/>
            <person name="Kato T."/>
            <person name="Kawaji H."/>
            <person name="Kawagashira N."/>
            <person name="Kawashima T."/>
            <person name="Kojima M."/>
            <person name="Kondo S."/>
            <person name="Konno H."/>
            <person name="Nakano K."/>
            <person name="Ninomiya N."/>
            <person name="Nishio T."/>
            <person name="Okada M."/>
            <person name="Plessy C."/>
            <person name="Shibata K."/>
            <person name="Shiraki T."/>
            <person name="Suzuki S."/>
            <person name="Tagami M."/>
            <person name="Waki K."/>
            <person name="Watahiki A."/>
            <person name="Okamura-Oho Y."/>
            <person name="Suzuki H."/>
            <person name="Kawai J."/>
            <person name="Hayashizaki Y."/>
        </authorList>
    </citation>
    <scope>NUCLEOTIDE SEQUENCE [LARGE SCALE MRNA]</scope>
    <source>
        <strain>C57BL/6J</strain>
        <strain>DBA/2J</strain>
        <tissue>Bone marrow</tissue>
        <tissue>Hippocampus</tissue>
        <tissue>Small intestine</tissue>
        <tissue>Tongue</tissue>
    </source>
</reference>
<reference key="2">
    <citation type="journal article" date="2004" name="Genome Res.">
        <title>The status, quality, and expansion of the NIH full-length cDNA project: the Mammalian Gene Collection (MGC).</title>
        <authorList>
            <consortium name="The MGC Project Team"/>
        </authorList>
    </citation>
    <scope>NUCLEOTIDE SEQUENCE [LARGE SCALE MRNA]</scope>
    <source>
        <strain>C57BL/6J</strain>
        <tissue>Brain</tissue>
    </source>
</reference>
<reference key="3">
    <citation type="journal article" date="2010" name="Cell">
        <title>A tissue-specific atlas of mouse protein phosphorylation and expression.</title>
        <authorList>
            <person name="Huttlin E.L."/>
            <person name="Jedrychowski M.P."/>
            <person name="Elias J.E."/>
            <person name="Goswami T."/>
            <person name="Rad R."/>
            <person name="Beausoleil S.A."/>
            <person name="Villen J."/>
            <person name="Haas W."/>
            <person name="Sowa M.E."/>
            <person name="Gygi S.P."/>
        </authorList>
    </citation>
    <scope>PHOSPHORYLATION [LARGE SCALE ANALYSIS] AT SER-45</scope>
    <scope>IDENTIFICATION BY MASS SPECTROMETRY [LARGE SCALE ANALYSIS]</scope>
    <source>
        <tissue>Brain</tissue>
        <tissue>Brown adipose tissue</tissue>
        <tissue>Heart</tissue>
        <tissue>Kidney</tissue>
        <tissue>Liver</tissue>
        <tissue>Lung</tissue>
        <tissue>Pancreas</tissue>
        <tissue>Spleen</tissue>
        <tissue>Testis</tissue>
    </source>
</reference>
<protein>
    <recommendedName>
        <fullName>Mitochondrial import receptor subunit TOM22 homolog</fullName>
    </recommendedName>
    <alternativeName>
        <fullName>Translocase of outer membrane 22 kDa subunit homolog</fullName>
    </alternativeName>
</protein>
<comment type="function">
    <text evidence="2 3">Central receptor component of the translocase of the outer membrane of mitochondria (TOM complex) responsible for the recognition and translocation of cytosolically synthesized mitochondrial preproteins. Together with the peripheral receptor TOM20 functions as the transit peptide receptor and facilitates the movement of preproteins into the translocation pore (By similarity). Required for the translocation across the mitochondrial outer membrane of cytochrome P450 monooxygenases (By similarity).</text>
</comment>
<comment type="subunit">
    <text evidence="1">Forms part of the preprotein translocase complex of the outer mitochondrial membrane (TOM complex) which consists of at least 7 different proteins (TOMM5, TOMM6, TOMM7, TOMM20, TOMM22, TOMM40 and TOMM70). Interacts with PPP2R2B and TOMM40 (By similarity).</text>
</comment>
<comment type="subcellular location">
    <subcellularLocation>
        <location evidence="1">Mitochondrion outer membrane</location>
        <topology evidence="1">Single-pass membrane protein</topology>
    </subcellularLocation>
</comment>
<comment type="domain">
    <text evidence="1">The N-terminal domain (residues 1-62) is important for binding to the unfolded mature imported proteins. Residues (49-71) of the cytoplasmic domain interacts with TOMM20 while the C-terminal segment (residues 63-82) binds presequence of preproteins. Requires the transmembrane domain (TMD), a short segment (the import sequence) in the cytoplasmic domain localizing separately from the TMD and the C-tail signal in the C-terminal domain for efficient targeting and integration into the TOM complex (By similarity).</text>
</comment>
<comment type="similarity">
    <text evidence="6">Belongs to the Tom22 family.</text>
</comment>
<evidence type="ECO:0000250" key="1"/>
<evidence type="ECO:0000250" key="2">
    <source>
        <dbReference type="UniProtKB" id="Q75Q41"/>
    </source>
</evidence>
<evidence type="ECO:0000250" key="3">
    <source>
        <dbReference type="UniProtKB" id="Q9NS69"/>
    </source>
</evidence>
<evidence type="ECO:0000255" key="4"/>
<evidence type="ECO:0000256" key="5">
    <source>
        <dbReference type="SAM" id="MobiDB-lite"/>
    </source>
</evidence>
<evidence type="ECO:0000305" key="6"/>
<evidence type="ECO:0007744" key="7">
    <source>
    </source>
</evidence>
<sequence>MAAAVAAAGAGEPLSPEELLPKAEAEKAEEELEEDDDDELDETLSERLWGLTEMFPERVRSAAGATFDLSLFVAQKMYRFSRAALWIGTTSFMILVLPVVFETEKLQMEQQQQLQQRQILLGPNTGLSGGMPGALPPLPGKM</sequence>
<proteinExistence type="evidence at protein level"/>
<name>TOM22_MOUSE</name>
<gene>
    <name type="primary">Tomm22</name>
    <name type="synonym">Tom22</name>
</gene>